<name>FXJ1A_DANRE</name>
<organism>
    <name type="scientific">Danio rerio</name>
    <name type="common">Zebrafish</name>
    <name type="synonym">Brachydanio rerio</name>
    <dbReference type="NCBI Taxonomy" id="7955"/>
    <lineage>
        <taxon>Eukaryota</taxon>
        <taxon>Metazoa</taxon>
        <taxon>Chordata</taxon>
        <taxon>Craniata</taxon>
        <taxon>Vertebrata</taxon>
        <taxon>Euteleostomi</taxon>
        <taxon>Actinopterygii</taxon>
        <taxon>Neopterygii</taxon>
        <taxon>Teleostei</taxon>
        <taxon>Ostariophysi</taxon>
        <taxon>Cypriniformes</taxon>
        <taxon>Danionidae</taxon>
        <taxon>Danioninae</taxon>
        <taxon>Danio</taxon>
    </lineage>
</organism>
<gene>
    <name evidence="11" type="primary">foxj1a</name>
    <name evidence="8" type="synonym">foxj1</name>
</gene>
<keyword id="KW-0010">Activator</keyword>
<keyword id="KW-0970">Cilium biogenesis/degradation</keyword>
<keyword id="KW-0238">DNA-binding</keyword>
<keyword id="KW-0539">Nucleus</keyword>
<keyword id="KW-1185">Reference proteome</keyword>
<keyword id="KW-0804">Transcription</keyword>
<keyword id="KW-0805">Transcription regulation</keyword>
<evidence type="ECO:0000255" key="1">
    <source>
        <dbReference type="PROSITE-ProRule" id="PRU00089"/>
    </source>
</evidence>
<evidence type="ECO:0000256" key="2">
    <source>
        <dbReference type="SAM" id="MobiDB-lite"/>
    </source>
</evidence>
<evidence type="ECO:0000269" key="3">
    <source>
    </source>
</evidence>
<evidence type="ECO:0000269" key="4">
    <source>
    </source>
</evidence>
<evidence type="ECO:0000269" key="5">
    <source>
    </source>
</evidence>
<evidence type="ECO:0000269" key="6">
    <source>
    </source>
</evidence>
<evidence type="ECO:0000269" key="7">
    <source>
    </source>
</evidence>
<evidence type="ECO:0000303" key="8">
    <source>
    </source>
</evidence>
<evidence type="ECO:0000305" key="9"/>
<evidence type="ECO:0000312" key="10">
    <source>
        <dbReference type="EMBL" id="AAI24229.1"/>
    </source>
</evidence>
<evidence type="ECO:0000312" key="11">
    <source>
        <dbReference type="ZFIN" id="ZDB-GENE-060929-1178"/>
    </source>
</evidence>
<reference key="1">
    <citation type="journal article" date="2008" name="Int. J. Dev. Biol.">
        <title>Isolation and expression analysis of foxj1 and foxj1.2 in zebrafish embryos.</title>
        <authorList>
            <person name="Aamar E."/>
            <person name="Dawid I.B."/>
        </authorList>
    </citation>
    <scope>NUCLEOTIDE SEQUENCE [MRNA]</scope>
    <scope>TISSUE SPECIFICITY</scope>
</reference>
<reference key="2">
    <citation type="journal article" date="2008" name="Nat. Genet.">
        <title>Foxj1 transcription factors are master regulators of the motile ciliogenic program.</title>
        <authorList>
            <person name="Yu X."/>
            <person name="Ng C.P."/>
            <person name="Habacher H."/>
            <person name="Roy S."/>
        </authorList>
    </citation>
    <scope>NUCLEOTIDE SEQUENCE [MRNA]</scope>
    <scope>FUNCTION</scope>
    <scope>TISSUE SPECIFICITY</scope>
    <scope>INDUCTION</scope>
</reference>
<reference key="3">
    <citation type="journal article" date="2013" name="Nature">
        <title>The zebrafish reference genome sequence and its relationship to the human genome.</title>
        <authorList>
            <person name="Howe K."/>
            <person name="Clark M.D."/>
            <person name="Torroja C.F."/>
            <person name="Torrance J."/>
            <person name="Berthelot C."/>
            <person name="Muffato M."/>
            <person name="Collins J.E."/>
            <person name="Humphray S."/>
            <person name="McLaren K."/>
            <person name="Matthews L."/>
            <person name="McLaren S."/>
            <person name="Sealy I."/>
            <person name="Caccamo M."/>
            <person name="Churcher C."/>
            <person name="Scott C."/>
            <person name="Barrett J.C."/>
            <person name="Koch R."/>
            <person name="Rauch G.J."/>
            <person name="White S."/>
            <person name="Chow W."/>
            <person name="Kilian B."/>
            <person name="Quintais L.T."/>
            <person name="Guerra-Assuncao J.A."/>
            <person name="Zhou Y."/>
            <person name="Gu Y."/>
            <person name="Yen J."/>
            <person name="Vogel J.H."/>
            <person name="Eyre T."/>
            <person name="Redmond S."/>
            <person name="Banerjee R."/>
            <person name="Chi J."/>
            <person name="Fu B."/>
            <person name="Langley E."/>
            <person name="Maguire S.F."/>
            <person name="Laird G.K."/>
            <person name="Lloyd D."/>
            <person name="Kenyon E."/>
            <person name="Donaldson S."/>
            <person name="Sehra H."/>
            <person name="Almeida-King J."/>
            <person name="Loveland J."/>
            <person name="Trevanion S."/>
            <person name="Jones M."/>
            <person name="Quail M."/>
            <person name="Willey D."/>
            <person name="Hunt A."/>
            <person name="Burton J."/>
            <person name="Sims S."/>
            <person name="McLay K."/>
            <person name="Plumb B."/>
            <person name="Davis J."/>
            <person name="Clee C."/>
            <person name="Oliver K."/>
            <person name="Clark R."/>
            <person name="Riddle C."/>
            <person name="Elliot D."/>
            <person name="Threadgold G."/>
            <person name="Harden G."/>
            <person name="Ware D."/>
            <person name="Begum S."/>
            <person name="Mortimore B."/>
            <person name="Kerry G."/>
            <person name="Heath P."/>
            <person name="Phillimore B."/>
            <person name="Tracey A."/>
            <person name="Corby N."/>
            <person name="Dunn M."/>
            <person name="Johnson C."/>
            <person name="Wood J."/>
            <person name="Clark S."/>
            <person name="Pelan S."/>
            <person name="Griffiths G."/>
            <person name="Smith M."/>
            <person name="Glithero R."/>
            <person name="Howden P."/>
            <person name="Barker N."/>
            <person name="Lloyd C."/>
            <person name="Stevens C."/>
            <person name="Harley J."/>
            <person name="Holt K."/>
            <person name="Panagiotidis G."/>
            <person name="Lovell J."/>
            <person name="Beasley H."/>
            <person name="Henderson C."/>
            <person name="Gordon D."/>
            <person name="Auger K."/>
            <person name="Wright D."/>
            <person name="Collins J."/>
            <person name="Raisen C."/>
            <person name="Dyer L."/>
            <person name="Leung K."/>
            <person name="Robertson L."/>
            <person name="Ambridge K."/>
            <person name="Leongamornlert D."/>
            <person name="McGuire S."/>
            <person name="Gilderthorp R."/>
            <person name="Griffiths C."/>
            <person name="Manthravadi D."/>
            <person name="Nichol S."/>
            <person name="Barker G."/>
            <person name="Whitehead S."/>
            <person name="Kay M."/>
            <person name="Brown J."/>
            <person name="Murnane C."/>
            <person name="Gray E."/>
            <person name="Humphries M."/>
            <person name="Sycamore N."/>
            <person name="Barker D."/>
            <person name="Saunders D."/>
            <person name="Wallis J."/>
            <person name="Babbage A."/>
            <person name="Hammond S."/>
            <person name="Mashreghi-Mohammadi M."/>
            <person name="Barr L."/>
            <person name="Martin S."/>
            <person name="Wray P."/>
            <person name="Ellington A."/>
            <person name="Matthews N."/>
            <person name="Ellwood M."/>
            <person name="Woodmansey R."/>
            <person name="Clark G."/>
            <person name="Cooper J."/>
            <person name="Tromans A."/>
            <person name="Grafham D."/>
            <person name="Skuce C."/>
            <person name="Pandian R."/>
            <person name="Andrews R."/>
            <person name="Harrison E."/>
            <person name="Kimberley A."/>
            <person name="Garnett J."/>
            <person name="Fosker N."/>
            <person name="Hall R."/>
            <person name="Garner P."/>
            <person name="Kelly D."/>
            <person name="Bird C."/>
            <person name="Palmer S."/>
            <person name="Gehring I."/>
            <person name="Berger A."/>
            <person name="Dooley C.M."/>
            <person name="Ersan-Urun Z."/>
            <person name="Eser C."/>
            <person name="Geiger H."/>
            <person name="Geisler M."/>
            <person name="Karotki L."/>
            <person name="Kirn A."/>
            <person name="Konantz J."/>
            <person name="Konantz M."/>
            <person name="Oberlander M."/>
            <person name="Rudolph-Geiger S."/>
            <person name="Teucke M."/>
            <person name="Lanz C."/>
            <person name="Raddatz G."/>
            <person name="Osoegawa K."/>
            <person name="Zhu B."/>
            <person name="Rapp A."/>
            <person name="Widaa S."/>
            <person name="Langford C."/>
            <person name="Yang F."/>
            <person name="Schuster S.C."/>
            <person name="Carter N.P."/>
            <person name="Harrow J."/>
            <person name="Ning Z."/>
            <person name="Herrero J."/>
            <person name="Searle S.M."/>
            <person name="Enright A."/>
            <person name="Geisler R."/>
            <person name="Plasterk R.H."/>
            <person name="Lee C."/>
            <person name="Westerfield M."/>
            <person name="de Jong P.J."/>
            <person name="Zon L.I."/>
            <person name="Postlethwait J.H."/>
            <person name="Nusslein-Volhard C."/>
            <person name="Hubbard T.J."/>
            <person name="Roest Crollius H."/>
            <person name="Rogers J."/>
            <person name="Stemple D.L."/>
        </authorList>
    </citation>
    <scope>NUCLEOTIDE SEQUENCE [LARGE SCALE GENOMIC DNA]</scope>
    <source>
        <strain>Tuebingen</strain>
    </source>
</reference>
<reference key="4">
    <citation type="submission" date="2006-09" db="EMBL/GenBank/DDBJ databases">
        <authorList>
            <consortium name="NIH - Zebrafish Gene Collection (ZGC) project"/>
        </authorList>
    </citation>
    <scope>NUCLEOTIDE SEQUENCE [LARGE SCALE MRNA]</scope>
    <source>
        <tissue evidence="10">Testis</tissue>
    </source>
</reference>
<reference key="5">
    <citation type="journal article" date="2008" name="Nat. Genet.">
        <title>The forkhead protein Foxj1 specifies node-like cilia in Xenopus and zebrafish embryos.</title>
        <authorList>
            <person name="Stubbs J.L."/>
            <person name="Oishi I."/>
            <person name="Izpisua Belmonte J.C."/>
            <person name="Kintner C."/>
        </authorList>
    </citation>
    <scope>FUNCTION</scope>
    <scope>TISSUE SPECIFICITY</scope>
    <scope>DISRUPTION PHENOTYPE</scope>
</reference>
<reference key="6">
    <citation type="journal article" date="2009" name="Biochem. Biophys. Res. Commun.">
        <title>Both foxj1a and foxj1b are implicated in left-right asymmetric development in zebrafish embryos.</title>
        <authorList>
            <person name="Tian T."/>
            <person name="Zhao L."/>
            <person name="Zhang M."/>
            <person name="Zhao X."/>
            <person name="Meng A."/>
        </authorList>
    </citation>
    <scope>DISRUPTION PHENOTYPE</scope>
</reference>
<reference key="7">
    <citation type="journal article" date="2010" name="Proc. Natl. Acad. Sci. U.S.A.">
        <title>The zebrafish foxj1a transcription factor regulates cilia function in response to injury and epithelial stretch.</title>
        <authorList>
            <person name="Hellman N.E."/>
            <person name="Liu Y."/>
            <person name="Merkel E."/>
            <person name="Austin C."/>
            <person name="Le Corre S."/>
            <person name="Beier D.R."/>
            <person name="Sun Z."/>
            <person name="Sharma N."/>
            <person name="Yoder B.K."/>
            <person name="Drummond I.A."/>
        </authorList>
    </citation>
    <scope>FUNCTION</scope>
    <scope>INDUCTION</scope>
</reference>
<feature type="chain" id="PRO_0000430814" description="Forkhead box protein J1-A">
    <location>
        <begin position="1"/>
        <end position="458"/>
    </location>
</feature>
<feature type="DNA-binding region" description="Fork-head" evidence="1">
    <location>
        <begin position="142"/>
        <end position="236"/>
    </location>
</feature>
<feature type="region of interest" description="Disordered" evidence="2">
    <location>
        <begin position="68"/>
        <end position="99"/>
    </location>
</feature>
<feature type="region of interest" description="Disordered" evidence="2">
    <location>
        <begin position="305"/>
        <end position="324"/>
    </location>
</feature>
<feature type="compositionally biased region" description="Polar residues" evidence="2">
    <location>
        <begin position="68"/>
        <end position="78"/>
    </location>
</feature>
<feature type="compositionally biased region" description="Basic residues" evidence="2">
    <location>
        <begin position="305"/>
        <end position="321"/>
    </location>
</feature>
<feature type="sequence conflict" description="In Ref. 4; AAI24229/AAI64538." ref="4">
    <original>N</original>
    <variation>S</variation>
    <location>
        <position position="188"/>
    </location>
</feature>
<feature type="sequence conflict" description="In Ref. 1; ABW82682." ref="1">
    <original>G</original>
    <variation>E</variation>
    <location>
        <position position="229"/>
    </location>
</feature>
<feature type="sequence conflict" description="In Ref. 2; ACF15248." ref="2">
    <original>R</original>
    <variation>T</variation>
    <location>
        <position position="250"/>
    </location>
</feature>
<feature type="sequence conflict" description="In Ref. 2; ACF15248 and 4; AAI24229/AAI64538." ref="2 4">
    <original>V</original>
    <variation>I</variation>
    <location>
        <position position="258"/>
    </location>
</feature>
<feature type="sequence conflict" description="In Ref. 4; AAI24229/AAI64538." ref="4">
    <original>S</original>
    <variation>N</variation>
    <location>
        <position position="281"/>
    </location>
</feature>
<feature type="sequence conflict" description="In Ref. 2; ACF15248 and 4; AAI24229/AAI64538." ref="2 4">
    <original>Y</original>
    <variation>H</variation>
    <location>
        <position position="312"/>
    </location>
</feature>
<sequence length="458" mass="50720">MLSMSSMDPWPEGSVGLEEEVVTAAAQAERLDTSTPLQCNTSLDSDNLDDSLTSLQWLQEFSILNASTGQHTSPSSHSHLMGSDAPSSPLAGDPASIGMPLTPGKPTAASFCRVPMFSALPSLVAHGHCPDEVDYKSNPHIKPPYSYATLICMAMQASKKTKITLSCIYKWITDNFCYFRHADPTWQNSIRHNLSLNKCFIKVPRQKDEPGKGGFWKIDPQYAERLLNGAYKKRRLPPVQINPALQHRLRMNAQATGVISRNLSVSPESQQLLKDFEEATSADQNWDPRLAEATMLSCWISGKGTNKRKQPYNHRTGKTPRRSSSPLLVMDEQEDLSSLRGNFDWDALLDSALNGELSLNEGSPLSPTPQDEELMIRGTHISPQEAPVENHVLMETQRSGDEDFDEETFLATAFLQSPWSEVDESNRSDFLGSSTVSIDQLFDLSFGGDLSSKIETLL</sequence>
<dbReference type="EMBL" id="EU201184">
    <property type="protein sequence ID" value="ABW82682.1"/>
    <property type="molecule type" value="mRNA"/>
</dbReference>
<dbReference type="EMBL" id="EU599363">
    <property type="protein sequence ID" value="ACF15248.1"/>
    <property type="molecule type" value="mRNA"/>
</dbReference>
<dbReference type="EMBL" id="CABZ01077367">
    <property type="status" value="NOT_ANNOTATED_CDS"/>
    <property type="molecule type" value="Genomic_DNA"/>
</dbReference>
<dbReference type="EMBL" id="BC124228">
    <property type="protein sequence ID" value="AAI24229.1"/>
    <property type="molecule type" value="mRNA"/>
</dbReference>
<dbReference type="EMBL" id="BC164538">
    <property type="protein sequence ID" value="AAI64538.1"/>
    <property type="molecule type" value="mRNA"/>
</dbReference>
<dbReference type="RefSeq" id="NP_001070174.2">
    <property type="nucleotide sequence ID" value="NM_001076706.2"/>
</dbReference>
<dbReference type="SMR" id="F1QDF8"/>
<dbReference type="FunCoup" id="F1QDF8">
    <property type="interactions" value="1448"/>
</dbReference>
<dbReference type="STRING" id="7955.ENSDARP00000134207"/>
<dbReference type="PaxDb" id="7955-ENSDARP00000077301"/>
<dbReference type="Ensembl" id="ENSDART00000157772">
    <property type="protein sequence ID" value="ENSDARP00000134207"/>
    <property type="gene ID" value="ENSDARG00000101919"/>
</dbReference>
<dbReference type="Ensembl" id="ENSDART00000168280">
    <property type="protein sequence ID" value="ENSDARP00000132873"/>
    <property type="gene ID" value="ENSDARG00000101919"/>
</dbReference>
<dbReference type="GeneID" id="767737"/>
<dbReference type="KEGG" id="dre:767737"/>
<dbReference type="AGR" id="ZFIN:ZDB-GENE-060929-1178"/>
<dbReference type="CTD" id="767737"/>
<dbReference type="ZFIN" id="ZDB-GENE-060929-1178">
    <property type="gene designation" value="foxj1a"/>
</dbReference>
<dbReference type="eggNOG" id="KOG2294">
    <property type="taxonomic scope" value="Eukaryota"/>
</dbReference>
<dbReference type="HOGENOM" id="CLU_050055_0_0_1"/>
<dbReference type="InParanoid" id="F1QDF8"/>
<dbReference type="OMA" id="WARPLTV"/>
<dbReference type="OrthoDB" id="691130at2759"/>
<dbReference type="PhylomeDB" id="F1QDF8"/>
<dbReference type="TreeFam" id="TF333250"/>
<dbReference type="PRO" id="PR:F1QDF8"/>
<dbReference type="Proteomes" id="UP000000437">
    <property type="component" value="Chromosome 3"/>
</dbReference>
<dbReference type="Bgee" id="ENSDARG00000101919">
    <property type="expression patterns" value="Expressed in testis and 50 other cell types or tissues"/>
</dbReference>
<dbReference type="GO" id="GO:0005576">
    <property type="term" value="C:extracellular region"/>
    <property type="evidence" value="ECO:0007669"/>
    <property type="project" value="GOC"/>
</dbReference>
<dbReference type="GO" id="GO:0005634">
    <property type="term" value="C:nucleus"/>
    <property type="evidence" value="ECO:0000318"/>
    <property type="project" value="GO_Central"/>
</dbReference>
<dbReference type="GO" id="GO:0000981">
    <property type="term" value="F:DNA-binding transcription factor activity, RNA polymerase II-specific"/>
    <property type="evidence" value="ECO:0000318"/>
    <property type="project" value="GO_Central"/>
</dbReference>
<dbReference type="GO" id="GO:0000978">
    <property type="term" value="F:RNA polymerase II cis-regulatory region sequence-specific DNA binding"/>
    <property type="evidence" value="ECO:0000318"/>
    <property type="project" value="GO_Central"/>
</dbReference>
<dbReference type="GO" id="GO:0043565">
    <property type="term" value="F:sequence-specific DNA binding"/>
    <property type="evidence" value="ECO:0000314"/>
    <property type="project" value="ZFIN"/>
</dbReference>
<dbReference type="GO" id="GO:0090660">
    <property type="term" value="P:cerebrospinal fluid circulation"/>
    <property type="evidence" value="ECO:0000315"/>
    <property type="project" value="ZFIN"/>
</dbReference>
<dbReference type="GO" id="GO:0060271">
    <property type="term" value="P:cilium assembly"/>
    <property type="evidence" value="ECO:0000314"/>
    <property type="project" value="ZFIN"/>
</dbReference>
<dbReference type="GO" id="GO:0007368">
    <property type="term" value="P:determination of left/right symmetry"/>
    <property type="evidence" value="ECO:0000315"/>
    <property type="project" value="ZFIN"/>
</dbReference>
<dbReference type="GO" id="GO:0003351">
    <property type="term" value="P:epithelial cilium movement involved in extracellular fluid movement"/>
    <property type="evidence" value="ECO:0000315"/>
    <property type="project" value="ZFIN"/>
</dbReference>
<dbReference type="GO" id="GO:0003146">
    <property type="term" value="P:heart jogging"/>
    <property type="evidence" value="ECO:0000315"/>
    <property type="project" value="ZFIN"/>
</dbReference>
<dbReference type="GO" id="GO:0001947">
    <property type="term" value="P:heart looping"/>
    <property type="evidence" value="ECO:0000315"/>
    <property type="project" value="ZFIN"/>
</dbReference>
<dbReference type="GO" id="GO:0070121">
    <property type="term" value="P:Kupffer's vesicle development"/>
    <property type="evidence" value="ECO:0000304"/>
    <property type="project" value="ZFIN"/>
</dbReference>
<dbReference type="GO" id="GO:0060296">
    <property type="term" value="P:regulation of cilium beat frequency involved in ciliary motility"/>
    <property type="evidence" value="ECO:0000315"/>
    <property type="project" value="ZFIN"/>
</dbReference>
<dbReference type="GO" id="GO:0006357">
    <property type="term" value="P:regulation of transcription by RNA polymerase II"/>
    <property type="evidence" value="ECO:0000318"/>
    <property type="project" value="GO_Central"/>
</dbReference>
<dbReference type="GO" id="GO:0009611">
    <property type="term" value="P:response to wounding"/>
    <property type="evidence" value="ECO:0000315"/>
    <property type="project" value="ZFIN"/>
</dbReference>
<dbReference type="CDD" id="cd20023">
    <property type="entry name" value="FH_FOXJ1"/>
    <property type="match status" value="1"/>
</dbReference>
<dbReference type="FunFam" id="1.10.10.10:FF:000030">
    <property type="entry name" value="Forkhead box protein K2"/>
    <property type="match status" value="1"/>
</dbReference>
<dbReference type="Gene3D" id="1.10.10.10">
    <property type="entry name" value="Winged helix-like DNA-binding domain superfamily/Winged helix DNA-binding domain"/>
    <property type="match status" value="1"/>
</dbReference>
<dbReference type="InterPro" id="IPR047512">
    <property type="entry name" value="FH_FOXJ1"/>
</dbReference>
<dbReference type="InterPro" id="IPR001766">
    <property type="entry name" value="Fork_head_dom"/>
</dbReference>
<dbReference type="InterPro" id="IPR047513">
    <property type="entry name" value="FOXJ1"/>
</dbReference>
<dbReference type="InterPro" id="IPR018122">
    <property type="entry name" value="TF_fork_head_CS_1"/>
</dbReference>
<dbReference type="InterPro" id="IPR030456">
    <property type="entry name" value="TF_fork_head_CS_2"/>
</dbReference>
<dbReference type="InterPro" id="IPR036388">
    <property type="entry name" value="WH-like_DNA-bd_sf"/>
</dbReference>
<dbReference type="InterPro" id="IPR036390">
    <property type="entry name" value="WH_DNA-bd_sf"/>
</dbReference>
<dbReference type="PANTHER" id="PTHR46805">
    <property type="entry name" value="FORKHEAD BOX PROTEIN J1"/>
    <property type="match status" value="1"/>
</dbReference>
<dbReference type="PANTHER" id="PTHR46805:SF2">
    <property type="entry name" value="FORKHEAD BOX PROTEIN J1-A"/>
    <property type="match status" value="1"/>
</dbReference>
<dbReference type="Pfam" id="PF00250">
    <property type="entry name" value="Forkhead"/>
    <property type="match status" value="1"/>
</dbReference>
<dbReference type="PRINTS" id="PR00053">
    <property type="entry name" value="FORKHEAD"/>
</dbReference>
<dbReference type="SMART" id="SM00339">
    <property type="entry name" value="FH"/>
    <property type="match status" value="1"/>
</dbReference>
<dbReference type="SUPFAM" id="SSF46785">
    <property type="entry name" value="Winged helix' DNA-binding domain"/>
    <property type="match status" value="1"/>
</dbReference>
<dbReference type="PROSITE" id="PS00657">
    <property type="entry name" value="FORK_HEAD_1"/>
    <property type="match status" value="1"/>
</dbReference>
<dbReference type="PROSITE" id="PS00658">
    <property type="entry name" value="FORK_HEAD_2"/>
    <property type="match status" value="1"/>
</dbReference>
<dbReference type="PROSITE" id="PS50039">
    <property type="entry name" value="FORK_HEAD_3"/>
    <property type="match status" value="1"/>
</dbReference>
<accession>F1QDF8</accession>
<accession>A8W994</accession>
<accession>B7SSI4</accession>
<accession>Q08CI2</accession>
<proteinExistence type="evidence at transcript level"/>
<protein>
    <recommendedName>
        <fullName evidence="9">Forkhead box protein J1-A</fullName>
    </recommendedName>
</protein>
<comment type="function">
    <text evidence="4 5 7">Key transcription factor required for motile ciliogenesis. Activates genes essential for motile cilia formation and function. Its activity is sufficient for ectopic development of cilia that resemble motile cilia.</text>
</comment>
<comment type="subcellular location">
    <subcellularLocation>
        <location evidence="1">Nucleus</location>
    </subcellularLocation>
</comment>
<comment type="tissue specificity">
    <text evidence="3 4 5">Expressed in floor plate, dorsal forerunner cells, Kupffers vesicle, the floor plate, pronephric ducts and kidney.</text>
</comment>
<comment type="induction">
    <text evidence="5 7">By hedgehog signaling in the floor plate. In response to injury and stretch.</text>
</comment>
<comment type="disruption phenotype">
    <text evidence="4 6">Randomization of the left-right body.</text>
</comment>
<comment type="similarity">
    <text evidence="9">Belongs to the FOXJ1 family.</text>
</comment>